<name>CAV2_PLEMO</name>
<comment type="function">
    <text evidence="1">May act as a scaffolding protein within caveolar membranes. Interacts directly with G-protein alpha subunits and can functionally regulate their activity. Acts as an accessory protein in conjunction with CAV1 in targeting to lipid rafts and driving caveolae formation. The Ser-36 phosphorylated form has a role in modulating mitosis in endothelial cells. Positive regulator of cellular mitogenesis of the MAPK signaling pathway. Required for the insulin-stimulated nuclear translocation and activation of MAPK1 and STAT3, and the subsequent regulation of cell cycle progression (By similarity).</text>
</comment>
<comment type="subunit">
    <text evidence="1">Monomer or homodimer (By similarity). Interacts with CAV1; the interaction forms a stable heterooligomeric complex that is required for targeting to lipid rafts and for caveolae formation. Tyrosine phosphorylated forms do not form heterooligomers with the Tyr-19-phosphorylated form existing as a monomer or dimer, and the Tyr-27-form as a monomer only. Interacts (tyrosine phosphorylated form) with the SH2 domain-containing proteins, RASA1, NCK1 and SRC. Interacts (tyrosine phosphorylated form) with INSR, the interaction (Tyr-27-phosphorylated form) is increased on insulin stimulation. Interacts (Tyr-19 phosphorylated form) with MAPK1 (phosphorylated form); the interaction, promoted by insulin, leads to nuclear location and MAPK1 activation. Interacts with STAT3; the interaction is increased on insulin-induced tyrosine phosphorylation leading to STAT activation (By similarity).</text>
</comment>
<comment type="subcellular location">
    <subcellularLocation>
        <location evidence="1">Nucleus</location>
    </subcellularLocation>
    <subcellularLocation>
        <location evidence="1">Cytoplasm</location>
    </subcellularLocation>
    <subcellularLocation>
        <location>Golgi apparatus membrane</location>
        <topology>Peripheral membrane protein</topology>
    </subcellularLocation>
    <subcellularLocation>
        <location>Cell membrane</location>
        <topology>Peripheral membrane protein</topology>
    </subcellularLocation>
    <subcellularLocation>
        <location>Membrane</location>
        <location>Caveola</location>
        <topology>Peripheral membrane protein</topology>
    </subcellularLocation>
    <text evidence="1">Potential hairpin-like structure in the membrane. Membrane protein of caveolae. Tyr-19-phosphorylated form is enriched at sites of cell-cell contact and is translocated to the nucleus in complex with MAPK1 in response to insulin (By similarity). Tyr-27-phosphorylated form is located both in the cytoplasm and plasma membrane. CAV1-mediated Ser-23-phosphorylated form locates to the plasma membrane. Ser-36-phosphorylated form resides in intracellular compartments.</text>
</comment>
<comment type="PTM">
    <text evidence="1">Phosphorylated on serine and tyrosine residues. CAV1 promotes phosphorylation on Ser-23 which then targets the complex to the plasma membrane, lipid rafts and caveolae. Phosphorylation on Ser-36 appears to modulate mitosis in endothelial cells (By similarity). Phosphorylation on both Tyr-19 and Tyr-27 is required for insulin-induced 'Ser-727' phosphorylation of STAT3 and its activation. Phosphorylation on Tyr-19 is required for insulin-induced phosphorylation of MAPK1 and DNA binding of STAT3. Tyrosine phosphorylation is induced by both EGF and insulin (By. similarity).</text>
</comment>
<comment type="similarity">
    <text evidence="5">Belongs to the caveolin family.</text>
</comment>
<proteinExistence type="inferred from homology"/>
<accession>Q2QLC2</accession>
<dbReference type="EMBL" id="DP000019">
    <property type="protein sequence ID" value="ABB89787.1"/>
    <property type="molecule type" value="Genomic_DNA"/>
</dbReference>
<dbReference type="SMR" id="Q2QLC2"/>
<dbReference type="GO" id="GO:0005901">
    <property type="term" value="C:caveola"/>
    <property type="evidence" value="ECO:0000250"/>
    <property type="project" value="UniProtKB"/>
</dbReference>
<dbReference type="GO" id="GO:0031410">
    <property type="term" value="C:cytoplasmic vesicle"/>
    <property type="evidence" value="ECO:0007669"/>
    <property type="project" value="TreeGrafter"/>
</dbReference>
<dbReference type="GO" id="GO:0005925">
    <property type="term" value="C:focal adhesion"/>
    <property type="evidence" value="ECO:0007669"/>
    <property type="project" value="TreeGrafter"/>
</dbReference>
<dbReference type="GO" id="GO:0000139">
    <property type="term" value="C:Golgi membrane"/>
    <property type="evidence" value="ECO:0007669"/>
    <property type="project" value="UniProtKB-SubCell"/>
</dbReference>
<dbReference type="GO" id="GO:0005634">
    <property type="term" value="C:nucleus"/>
    <property type="evidence" value="ECO:0007669"/>
    <property type="project" value="UniProtKB-SubCell"/>
</dbReference>
<dbReference type="GO" id="GO:0048471">
    <property type="term" value="C:perinuclear region of cytoplasm"/>
    <property type="evidence" value="ECO:0000250"/>
    <property type="project" value="UniProtKB"/>
</dbReference>
<dbReference type="GO" id="GO:0044853">
    <property type="term" value="C:plasma membrane raft"/>
    <property type="evidence" value="ECO:0000250"/>
    <property type="project" value="UniProtKB"/>
</dbReference>
<dbReference type="GO" id="GO:0042383">
    <property type="term" value="C:sarcolemma"/>
    <property type="evidence" value="ECO:0007669"/>
    <property type="project" value="TreeGrafter"/>
</dbReference>
<dbReference type="GO" id="GO:0031748">
    <property type="term" value="F:D1 dopamine receptor binding"/>
    <property type="evidence" value="ECO:0000250"/>
    <property type="project" value="UniProtKB"/>
</dbReference>
<dbReference type="GO" id="GO:0060090">
    <property type="term" value="F:molecular adaptor activity"/>
    <property type="evidence" value="ECO:0007669"/>
    <property type="project" value="TreeGrafter"/>
</dbReference>
<dbReference type="GO" id="GO:0019901">
    <property type="term" value="F:protein kinase binding"/>
    <property type="evidence" value="ECO:0007669"/>
    <property type="project" value="TreeGrafter"/>
</dbReference>
<dbReference type="GO" id="GO:0070836">
    <property type="term" value="P:caveola assembly"/>
    <property type="evidence" value="ECO:0000250"/>
    <property type="project" value="UniProtKB"/>
</dbReference>
<dbReference type="GO" id="GO:0007029">
    <property type="term" value="P:endoplasmic reticulum organization"/>
    <property type="evidence" value="ECO:0000250"/>
    <property type="project" value="UniProtKB"/>
</dbReference>
<dbReference type="GO" id="GO:0008286">
    <property type="term" value="P:insulin receptor signaling pathway"/>
    <property type="evidence" value="ECO:0007669"/>
    <property type="project" value="TreeGrafter"/>
</dbReference>
<dbReference type="GO" id="GO:0007005">
    <property type="term" value="P:mitochondrion organization"/>
    <property type="evidence" value="ECO:0000250"/>
    <property type="project" value="UniProtKB"/>
</dbReference>
<dbReference type="GO" id="GO:0001937">
    <property type="term" value="P:negative regulation of endothelial cell proliferation"/>
    <property type="evidence" value="ECO:0000250"/>
    <property type="project" value="UniProtKB"/>
</dbReference>
<dbReference type="GO" id="GO:0060161">
    <property type="term" value="P:positive regulation of dopamine receptor signaling pathway"/>
    <property type="evidence" value="ECO:0000250"/>
    <property type="project" value="UniProtKB"/>
</dbReference>
<dbReference type="GO" id="GO:0051480">
    <property type="term" value="P:regulation of cytosolic calcium ion concentration"/>
    <property type="evidence" value="ECO:0007669"/>
    <property type="project" value="TreeGrafter"/>
</dbReference>
<dbReference type="GO" id="GO:0048741">
    <property type="term" value="P:skeletal muscle fiber development"/>
    <property type="evidence" value="ECO:0000250"/>
    <property type="project" value="UniProtKB"/>
</dbReference>
<dbReference type="GO" id="GO:0048278">
    <property type="term" value="P:vesicle docking"/>
    <property type="evidence" value="ECO:0000250"/>
    <property type="project" value="UniProtKB"/>
</dbReference>
<dbReference type="GO" id="GO:0006906">
    <property type="term" value="P:vesicle fusion"/>
    <property type="evidence" value="ECO:0000250"/>
    <property type="project" value="UniProtKB"/>
</dbReference>
<dbReference type="InterPro" id="IPR001612">
    <property type="entry name" value="Caveolin"/>
</dbReference>
<dbReference type="PANTHER" id="PTHR10844">
    <property type="entry name" value="CAVEOLIN"/>
    <property type="match status" value="1"/>
</dbReference>
<dbReference type="PANTHER" id="PTHR10844:SF3">
    <property type="entry name" value="CAVEOLIN-2"/>
    <property type="match status" value="1"/>
</dbReference>
<dbReference type="Pfam" id="PF01146">
    <property type="entry name" value="Caveolin"/>
    <property type="match status" value="1"/>
</dbReference>
<organism>
    <name type="scientific">Plecturocebus moloch</name>
    <name type="common">Dusky titi monkey</name>
    <name type="synonym">Callicebus moloch</name>
    <dbReference type="NCBI Taxonomy" id="9523"/>
    <lineage>
        <taxon>Eukaryota</taxon>
        <taxon>Metazoa</taxon>
        <taxon>Chordata</taxon>
        <taxon>Craniata</taxon>
        <taxon>Vertebrata</taxon>
        <taxon>Euteleostomi</taxon>
        <taxon>Mammalia</taxon>
        <taxon>Eutheria</taxon>
        <taxon>Euarchontoglires</taxon>
        <taxon>Primates</taxon>
        <taxon>Haplorrhini</taxon>
        <taxon>Platyrrhini</taxon>
        <taxon>Pitheciidae</taxon>
        <taxon>Callicebinae</taxon>
        <taxon>Plecturocebus</taxon>
    </lineage>
</organism>
<evidence type="ECO:0000250" key="1"/>
<evidence type="ECO:0000250" key="2">
    <source>
        <dbReference type="UniProtKB" id="P51636"/>
    </source>
</evidence>
<evidence type="ECO:0000250" key="3">
    <source>
        <dbReference type="UniProtKB" id="Q9WVC3"/>
    </source>
</evidence>
<evidence type="ECO:0000255" key="4"/>
<evidence type="ECO:0000305" key="5"/>
<keyword id="KW-1003">Cell membrane</keyword>
<keyword id="KW-0963">Cytoplasm</keyword>
<keyword id="KW-0333">Golgi apparatus</keyword>
<keyword id="KW-0472">Membrane</keyword>
<keyword id="KW-0539">Nucleus</keyword>
<keyword id="KW-0597">Phosphoprotein</keyword>
<sequence>MGLETEKADVQLFMDDDSYSHHSGLEYADPEKFADSGQDRDPHRLNSHLKLGFEDVVAEPVTTHSFDKVWICSHALFEISKYVMYKFLTVFLAIPLAFLAGILFATLSCLHIWIIMPFVKTCLMVLPSVQTIWKSVTDAIIAPLCTSIGRSFSSVSLQLSQD</sequence>
<protein>
    <recommendedName>
        <fullName>Caveolin-2</fullName>
    </recommendedName>
</protein>
<gene>
    <name type="primary">CAV2</name>
</gene>
<reference key="1">
    <citation type="submission" date="2005-11" db="EMBL/GenBank/DDBJ databases">
        <title>NISC comparative sequencing initiative.</title>
        <authorList>
            <person name="Antonellis A."/>
            <person name="Ayele K."/>
            <person name="Benjamin B."/>
            <person name="Blakesley R.W."/>
            <person name="Boakye A."/>
            <person name="Bouffard G.G."/>
            <person name="Brinkley C."/>
            <person name="Brooks S."/>
            <person name="Chu G."/>
            <person name="Coleman H."/>
            <person name="Engle J."/>
            <person name="Gestole M."/>
            <person name="Greene A."/>
            <person name="Guan X."/>
            <person name="Gupta J."/>
            <person name="Haghighi P."/>
            <person name="Han J."/>
            <person name="Hansen N."/>
            <person name="Ho S.-L."/>
            <person name="Hu P."/>
            <person name="Hunter G."/>
            <person name="Hurle B."/>
            <person name="Idol J.R."/>
            <person name="Kwong P."/>
            <person name="Laric P."/>
            <person name="Larson S."/>
            <person name="Lee-Lin S.-Q."/>
            <person name="Legaspi R."/>
            <person name="Madden M."/>
            <person name="Maduro Q.L."/>
            <person name="Maduro V.B."/>
            <person name="Margulies E.H."/>
            <person name="Masiello C."/>
            <person name="Maskeri B."/>
            <person name="McDowell J."/>
            <person name="Mojidi H.A."/>
            <person name="Mullikin J.C."/>
            <person name="Oestreicher J.S."/>
            <person name="Park M."/>
            <person name="Portnoy M.E."/>
            <person name="Prasad A."/>
            <person name="Puri O."/>
            <person name="Reddix-Dugue N."/>
            <person name="Schandler K."/>
            <person name="Schueler M.G."/>
            <person name="Sison C."/>
            <person name="Stantripop S."/>
            <person name="Stephen E."/>
            <person name="Taye A."/>
            <person name="Thomas J.W."/>
            <person name="Thomas P.J."/>
            <person name="Tsipouri V."/>
            <person name="Ung L."/>
            <person name="Vogt J.L."/>
            <person name="Wetherby K.D."/>
            <person name="Young A."/>
            <person name="Green E.D."/>
        </authorList>
    </citation>
    <scope>NUCLEOTIDE SEQUENCE [LARGE SCALE GENOMIC DNA]</scope>
</reference>
<feature type="chain" id="PRO_0000226336" description="Caveolin-2">
    <location>
        <begin position="1"/>
        <end position="162"/>
    </location>
</feature>
<feature type="topological domain" description="Cytoplasmic" evidence="4">
    <location>
        <begin position="1"/>
        <end position="86"/>
    </location>
</feature>
<feature type="intramembrane region" description="Helical" evidence="4">
    <location>
        <begin position="87"/>
        <end position="107"/>
    </location>
</feature>
<feature type="topological domain" description="Cytoplasmic" evidence="4">
    <location>
        <begin position="108"/>
        <end position="162"/>
    </location>
</feature>
<feature type="modified residue" description="Phosphotyrosine; by SRC" evidence="2">
    <location>
        <position position="19"/>
    </location>
</feature>
<feature type="modified residue" description="Phosphoserine" evidence="3">
    <location>
        <position position="20"/>
    </location>
</feature>
<feature type="modified residue" description="Phosphoserine" evidence="2">
    <location>
        <position position="23"/>
    </location>
</feature>
<feature type="modified residue" description="Phosphotyrosine; by SRC" evidence="2">
    <location>
        <position position="27"/>
    </location>
</feature>
<feature type="modified residue" description="Phosphoserine" evidence="2">
    <location>
        <position position="36"/>
    </location>
</feature>